<gene>
    <name evidence="1" type="primary">frr</name>
    <name type="ordered locus">CLL_A1261</name>
</gene>
<protein>
    <recommendedName>
        <fullName evidence="1">Ribosome-recycling factor</fullName>
        <shortName evidence="1">RRF</shortName>
    </recommendedName>
    <alternativeName>
        <fullName evidence="1">Ribosome-releasing factor</fullName>
    </alternativeName>
</protein>
<accession>B2TJ43</accession>
<sequence length="185" mass="20770">MIKDIIKNAEEKMQKTVTVLKSELGTMKAGRANPSMLDKIQIDYYGSMCPLSQAANISSPEPRVLMITPWEKQLLKEIEKAILKSDLGLNPSNDGSIIRLVIPELTEETRKDLVKKVKKTGEESKVAIRSIRRDANDKIKALKKDGDLSEDQVKKGEDDVQKKTDAIIKDIDKIIVDKEKEILAI</sequence>
<dbReference type="EMBL" id="CP001056">
    <property type="protein sequence ID" value="ACD24594.1"/>
    <property type="molecule type" value="Genomic_DNA"/>
</dbReference>
<dbReference type="SMR" id="B2TJ43"/>
<dbReference type="KEGG" id="cbk:CLL_A1261"/>
<dbReference type="PATRIC" id="fig|935198.13.peg.1207"/>
<dbReference type="HOGENOM" id="CLU_073981_2_0_9"/>
<dbReference type="Proteomes" id="UP000001195">
    <property type="component" value="Chromosome"/>
</dbReference>
<dbReference type="GO" id="GO:0005737">
    <property type="term" value="C:cytoplasm"/>
    <property type="evidence" value="ECO:0007669"/>
    <property type="project" value="UniProtKB-SubCell"/>
</dbReference>
<dbReference type="GO" id="GO:0043023">
    <property type="term" value="F:ribosomal large subunit binding"/>
    <property type="evidence" value="ECO:0007669"/>
    <property type="project" value="TreeGrafter"/>
</dbReference>
<dbReference type="GO" id="GO:0006415">
    <property type="term" value="P:translational termination"/>
    <property type="evidence" value="ECO:0007669"/>
    <property type="project" value="UniProtKB-UniRule"/>
</dbReference>
<dbReference type="CDD" id="cd00520">
    <property type="entry name" value="RRF"/>
    <property type="match status" value="1"/>
</dbReference>
<dbReference type="FunFam" id="1.10.132.20:FF:000001">
    <property type="entry name" value="Ribosome-recycling factor"/>
    <property type="match status" value="1"/>
</dbReference>
<dbReference type="FunFam" id="3.30.1360.40:FF:000001">
    <property type="entry name" value="Ribosome-recycling factor"/>
    <property type="match status" value="1"/>
</dbReference>
<dbReference type="Gene3D" id="3.30.1360.40">
    <property type="match status" value="1"/>
</dbReference>
<dbReference type="Gene3D" id="1.10.132.20">
    <property type="entry name" value="Ribosome-recycling factor"/>
    <property type="match status" value="1"/>
</dbReference>
<dbReference type="HAMAP" id="MF_00040">
    <property type="entry name" value="RRF"/>
    <property type="match status" value="1"/>
</dbReference>
<dbReference type="InterPro" id="IPR002661">
    <property type="entry name" value="Ribosome_recyc_fac"/>
</dbReference>
<dbReference type="InterPro" id="IPR023584">
    <property type="entry name" value="Ribosome_recyc_fac_dom"/>
</dbReference>
<dbReference type="InterPro" id="IPR036191">
    <property type="entry name" value="RRF_sf"/>
</dbReference>
<dbReference type="NCBIfam" id="TIGR00496">
    <property type="entry name" value="frr"/>
    <property type="match status" value="1"/>
</dbReference>
<dbReference type="PANTHER" id="PTHR20982:SF3">
    <property type="entry name" value="MITOCHONDRIAL RIBOSOME RECYCLING FACTOR PSEUDO 1"/>
    <property type="match status" value="1"/>
</dbReference>
<dbReference type="PANTHER" id="PTHR20982">
    <property type="entry name" value="RIBOSOME RECYCLING FACTOR"/>
    <property type="match status" value="1"/>
</dbReference>
<dbReference type="Pfam" id="PF01765">
    <property type="entry name" value="RRF"/>
    <property type="match status" value="1"/>
</dbReference>
<dbReference type="SUPFAM" id="SSF55194">
    <property type="entry name" value="Ribosome recycling factor, RRF"/>
    <property type="match status" value="1"/>
</dbReference>
<reference key="1">
    <citation type="submission" date="2008-04" db="EMBL/GenBank/DDBJ databases">
        <title>Complete sequence of Clostridium botulinum strain Eklund.</title>
        <authorList>
            <person name="Brinkac L.M."/>
            <person name="Brown J.L."/>
            <person name="Bruce D."/>
            <person name="Detter C."/>
            <person name="Munk C."/>
            <person name="Smith L.A."/>
            <person name="Smith T.J."/>
            <person name="Sutton G."/>
            <person name="Brettin T.S."/>
        </authorList>
    </citation>
    <scope>NUCLEOTIDE SEQUENCE [LARGE SCALE GENOMIC DNA]</scope>
    <source>
        <strain>Eklund 17B / Type B</strain>
    </source>
</reference>
<comment type="function">
    <text evidence="1">Responsible for the release of ribosomes from messenger RNA at the termination of protein biosynthesis. May increase the efficiency of translation by recycling ribosomes from one round of translation to another.</text>
</comment>
<comment type="subcellular location">
    <subcellularLocation>
        <location evidence="1">Cytoplasm</location>
    </subcellularLocation>
</comment>
<comment type="similarity">
    <text evidence="1">Belongs to the RRF family.</text>
</comment>
<organism>
    <name type="scientific">Clostridium botulinum (strain Eklund 17B / Type B)</name>
    <dbReference type="NCBI Taxonomy" id="935198"/>
    <lineage>
        <taxon>Bacteria</taxon>
        <taxon>Bacillati</taxon>
        <taxon>Bacillota</taxon>
        <taxon>Clostridia</taxon>
        <taxon>Eubacteriales</taxon>
        <taxon>Clostridiaceae</taxon>
        <taxon>Clostridium</taxon>
    </lineage>
</organism>
<name>RRF_CLOBB</name>
<keyword id="KW-0963">Cytoplasm</keyword>
<keyword id="KW-0648">Protein biosynthesis</keyword>
<evidence type="ECO:0000255" key="1">
    <source>
        <dbReference type="HAMAP-Rule" id="MF_00040"/>
    </source>
</evidence>
<proteinExistence type="inferred from homology"/>
<feature type="chain" id="PRO_1000090727" description="Ribosome-recycling factor">
    <location>
        <begin position="1"/>
        <end position="185"/>
    </location>
</feature>